<proteinExistence type="evidence at protein level"/>
<accession>G5EBV0</accession>
<accession>G5ECV8</accession>
<accession>G5EE79</accession>
<accession>G5EEP8</accession>
<accession>Q56W01</accession>
<name>EGL9_CAEEL</name>
<sequence length="723" mass="79743">MSSAPNDDCEIDKGTPSTASLFTTLMLSQPSSSTAVLQCTYCGSSCTSSQLQTCLFCGTVAYCSKEHQQLDWLTHKMICKSLQTSGMVPSNLMPQAAPAVMAPIPPTVSFDDPALTTSLLLSLQNNPILNQTISNFPPTFSITSKTEPEPSIPIQIPQRISSTSTVPFSSEGSAFKPYRNTHVFNSISSESMSSMCTSHEASLEHMSSASLAMFPTSSTAQSDISRLAQVLSLAGDSPASLALVTTSVPSTASTATIPPPATTTSSATSSGKSETITVGKEKIIQTDDPDIQIIETEGGSKPTVSRTRKRPTPSNSADPKINYKDHNKNVVYSTTLQEHQKHLQNRGLALSIHQAMVLRLRYIAEHVIRSLNEFGWAVVDNFLGSDHYKFTAKEIERLYERGLFSPGQLMEAKHKDEFHIKDIRSDHIYWYDGYDGRAKDAATVRLLISMIDSVIQHFKKRIDHDIGGRSRAMLAIYPGNGTRYVKHVDNPVKDGRCITTIYYCNENWDMATDGGTLRLYPETSMTPMDIDPRADRLVFFWSDRRNPHEVMPVFRHRFAITIWYMDKSERDKALAKGKESDAACASKKENDPTSSSLNSLIGSLLRPRKNPSTHDLSKLDLRLFPSTSSDPALVSAADEDRVDISADFQSTSSLAHPESTDSGVSLSTFNVAHNHMERTTSLQSISDHFRSERSHERRSSTSSDQDLDEGLPPPPSTNPEYYI</sequence>
<gene>
    <name evidence="27" type="primary">egl-9</name>
    <name evidence="27" type="ORF">F22E12.4</name>
</gene>
<keyword id="KW-0025">Alternative splicing</keyword>
<keyword id="KW-0966">Cell projection</keyword>
<keyword id="KW-0963">Cytoplasm</keyword>
<keyword id="KW-0223">Dioxygenase</keyword>
<keyword id="KW-0408">Iron</keyword>
<keyword id="KW-0479">Metal-binding</keyword>
<keyword id="KW-0539">Nucleus</keyword>
<keyword id="KW-0560">Oxidoreductase</keyword>
<keyword id="KW-1185">Reference proteome</keyword>
<keyword id="KW-0847">Vitamin C</keyword>
<keyword id="KW-0862">Zinc</keyword>
<keyword id="KW-0863">Zinc-finger</keyword>
<dbReference type="EC" id="1.14.11.29" evidence="7 14"/>
<dbReference type="EMBL" id="AF178536">
    <property type="protein sequence ID" value="AAD56365.1"/>
    <property type="molecule type" value="mRNA"/>
</dbReference>
<dbReference type="EMBL" id="BX284605">
    <property type="protein sequence ID" value="CAA94893.2"/>
    <property type="molecule type" value="Genomic_DNA"/>
</dbReference>
<dbReference type="EMBL" id="BX284605">
    <property type="protein sequence ID" value="CAD44114.1"/>
    <property type="molecule type" value="Genomic_DNA"/>
</dbReference>
<dbReference type="EMBL" id="BX284605">
    <property type="protein sequence ID" value="CAI79247.1"/>
    <property type="molecule type" value="Genomic_DNA"/>
</dbReference>
<dbReference type="EMBL" id="BX284605">
    <property type="protein sequence ID" value="CAI79160.1"/>
    <property type="molecule type" value="Genomic_DNA"/>
</dbReference>
<dbReference type="EMBL" id="BX284605">
    <property type="protein sequence ID" value="CAK55177.1"/>
    <property type="molecule type" value="Genomic_DNA"/>
</dbReference>
<dbReference type="PIR" id="T21276">
    <property type="entry name" value="T21276"/>
</dbReference>
<dbReference type="RefSeq" id="NP_001023832.1">
    <property type="nucleotide sequence ID" value="NM_001028661.3"/>
</dbReference>
<dbReference type="RefSeq" id="NP_001023833.1">
    <molecule id="G5EBV0-3"/>
    <property type="nucleotide sequence ID" value="NM_001028662.4"/>
</dbReference>
<dbReference type="RefSeq" id="NP_001023834.1">
    <molecule id="G5EBV0-4"/>
    <property type="nucleotide sequence ID" value="NM_001028663.6"/>
</dbReference>
<dbReference type="RefSeq" id="NP_001041105.1">
    <molecule id="G5EBV0-5"/>
    <property type="nucleotide sequence ID" value="NM_001047640.4"/>
</dbReference>
<dbReference type="RefSeq" id="NP_001359645.1">
    <molecule id="G5EBV0-2"/>
    <property type="nucleotide sequence ID" value="NM_001373098.1"/>
</dbReference>
<dbReference type="RefSeq" id="NP_741621.1">
    <molecule id="G5EBV0-1"/>
    <property type="nucleotide sequence ID" value="NM_171533.7"/>
</dbReference>
<dbReference type="SMR" id="G5EBV0"/>
<dbReference type="FunCoup" id="G5EBV0">
    <property type="interactions" value="858"/>
</dbReference>
<dbReference type="IntAct" id="G5EBV0">
    <property type="interactions" value="4"/>
</dbReference>
<dbReference type="STRING" id="6239.F22E12.4a.2"/>
<dbReference type="PaxDb" id="6239-F22E12.4a.2"/>
<dbReference type="PeptideAtlas" id="G5EBV0"/>
<dbReference type="EnsemblMetazoa" id="F22E12.4a.1">
    <molecule id="G5EBV0-1"/>
    <property type="protein sequence ID" value="F22E12.4a.1"/>
    <property type="gene ID" value="WBGene00001178"/>
</dbReference>
<dbReference type="EnsemblMetazoa" id="F22E12.4b.1">
    <molecule id="G5EBV0-2"/>
    <property type="protein sequence ID" value="F22E12.4b.1"/>
    <property type="gene ID" value="WBGene00001178"/>
</dbReference>
<dbReference type="EnsemblMetazoa" id="F22E12.4b.2">
    <molecule id="G5EBV0-2"/>
    <property type="protein sequence ID" value="F22E12.4b.2"/>
    <property type="gene ID" value="WBGene00001178"/>
</dbReference>
<dbReference type="EnsemblMetazoa" id="F22E12.4b.3">
    <molecule id="G5EBV0-2"/>
    <property type="protein sequence ID" value="F22E12.4b.3"/>
    <property type="gene ID" value="WBGene00001178"/>
</dbReference>
<dbReference type="EnsemblMetazoa" id="F22E12.4c.1">
    <molecule id="G5EBV0-3"/>
    <property type="protein sequence ID" value="F22E12.4c.1"/>
    <property type="gene ID" value="WBGene00001178"/>
</dbReference>
<dbReference type="EnsemblMetazoa" id="F22E12.4d.1">
    <molecule id="G5EBV0-4"/>
    <property type="protein sequence ID" value="F22E12.4d.1"/>
    <property type="gene ID" value="WBGene00001178"/>
</dbReference>
<dbReference type="EnsemblMetazoa" id="F22E12.4e.1">
    <molecule id="G5EBV0-5"/>
    <property type="protein sequence ID" value="F22E12.4e.1"/>
    <property type="gene ID" value="WBGene00001178"/>
</dbReference>
<dbReference type="GeneID" id="179461"/>
<dbReference type="KEGG" id="cel:CELE_F22E12.4"/>
<dbReference type="AGR" id="WB:WBGene00001178"/>
<dbReference type="CTD" id="179461"/>
<dbReference type="WormBase" id="F22E12.4a">
    <molecule id="G5EBV0-1"/>
    <property type="protein sequence ID" value="CE27755"/>
    <property type="gene ID" value="WBGene00001178"/>
    <property type="gene designation" value="egl-9"/>
</dbReference>
<dbReference type="WormBase" id="F22E12.4b">
    <molecule id="G5EBV0-2"/>
    <property type="protein sequence ID" value="CE31342"/>
    <property type="gene ID" value="WBGene00001178"/>
    <property type="gene designation" value="egl-9"/>
</dbReference>
<dbReference type="WormBase" id="F22E12.4c">
    <molecule id="G5EBV0-3"/>
    <property type="protein sequence ID" value="CE38327"/>
    <property type="gene ID" value="WBGene00001178"/>
    <property type="gene designation" value="egl-9"/>
</dbReference>
<dbReference type="WormBase" id="F22E12.4d">
    <molecule id="G5EBV0-4"/>
    <property type="protein sequence ID" value="CE38328"/>
    <property type="gene ID" value="WBGene00001178"/>
    <property type="gene designation" value="egl-9"/>
</dbReference>
<dbReference type="WormBase" id="F22E12.4e">
    <molecule id="G5EBV0-5"/>
    <property type="protein sequence ID" value="CE40254"/>
    <property type="gene ID" value="WBGene00001178"/>
    <property type="gene designation" value="egl-9"/>
</dbReference>
<dbReference type="eggNOG" id="KOG3710">
    <property type="taxonomic scope" value="Eukaryota"/>
</dbReference>
<dbReference type="GeneTree" id="ENSGT00940000155704"/>
<dbReference type="InParanoid" id="G5EBV0"/>
<dbReference type="OMA" id="HRFAITI"/>
<dbReference type="OrthoDB" id="5952526at2759"/>
<dbReference type="Reactome" id="R-CEL-1234176">
    <property type="pathway name" value="Oxygen-dependent proline hydroxylation of Hypoxia-inducible Factor Alpha"/>
</dbReference>
<dbReference type="SignaLink" id="G5EBV0"/>
<dbReference type="PRO" id="PR:G5EBV0"/>
<dbReference type="Proteomes" id="UP000001940">
    <property type="component" value="Chromosome V"/>
</dbReference>
<dbReference type="Bgee" id="WBGene00001178">
    <property type="expression patterns" value="Expressed in pharyngeal muscle cell (C elegans) and 3 other cell types or tissues"/>
</dbReference>
<dbReference type="GO" id="GO:0030424">
    <property type="term" value="C:axon"/>
    <property type="evidence" value="ECO:0007669"/>
    <property type="project" value="UniProtKB-SubCell"/>
</dbReference>
<dbReference type="GO" id="GO:0005737">
    <property type="term" value="C:cytoplasm"/>
    <property type="evidence" value="ECO:0007669"/>
    <property type="project" value="UniProtKB-SubCell"/>
</dbReference>
<dbReference type="GO" id="GO:0030425">
    <property type="term" value="C:dendrite"/>
    <property type="evidence" value="ECO:0000314"/>
    <property type="project" value="WormBase"/>
</dbReference>
<dbReference type="GO" id="GO:0005634">
    <property type="term" value="C:nucleus"/>
    <property type="evidence" value="ECO:0000314"/>
    <property type="project" value="WormBase"/>
</dbReference>
<dbReference type="GO" id="GO:0008198">
    <property type="term" value="F:ferrous iron binding"/>
    <property type="evidence" value="ECO:0000318"/>
    <property type="project" value="GO_Central"/>
</dbReference>
<dbReference type="GO" id="GO:0160082">
    <property type="term" value="F:hypoxia-inducible factor-proline dioxygenase activity"/>
    <property type="evidence" value="ECO:0007669"/>
    <property type="project" value="UniProtKB-EC"/>
</dbReference>
<dbReference type="GO" id="GO:0031418">
    <property type="term" value="F:L-ascorbic acid binding"/>
    <property type="evidence" value="ECO:0007669"/>
    <property type="project" value="UniProtKB-KW"/>
</dbReference>
<dbReference type="GO" id="GO:0031545">
    <property type="term" value="F:peptidyl-proline 4-dioxygenase activity"/>
    <property type="evidence" value="ECO:0000314"/>
    <property type="project" value="WormBase"/>
</dbReference>
<dbReference type="GO" id="GO:0031543">
    <property type="term" value="F:peptidyl-proline dioxygenase activity"/>
    <property type="evidence" value="ECO:0000318"/>
    <property type="project" value="GO_Central"/>
</dbReference>
<dbReference type="GO" id="GO:0008270">
    <property type="term" value="F:zinc ion binding"/>
    <property type="evidence" value="ECO:0007669"/>
    <property type="project" value="UniProtKB-KW"/>
</dbReference>
<dbReference type="GO" id="GO:0071456">
    <property type="term" value="P:cellular response to hypoxia"/>
    <property type="evidence" value="ECO:0000318"/>
    <property type="project" value="GO_Central"/>
</dbReference>
<dbReference type="GO" id="GO:0032880">
    <property type="term" value="P:regulation of protein localization"/>
    <property type="evidence" value="ECO:0000315"/>
    <property type="project" value="WormBase"/>
</dbReference>
<dbReference type="GO" id="GO:0001666">
    <property type="term" value="P:response to hypoxia"/>
    <property type="evidence" value="ECO:0000315"/>
    <property type="project" value="WormBase"/>
</dbReference>
<dbReference type="Gene3D" id="6.10.140.2220">
    <property type="match status" value="1"/>
</dbReference>
<dbReference type="Gene3D" id="2.60.120.620">
    <property type="entry name" value="q2cbj1_9rhob like domain"/>
    <property type="match status" value="1"/>
</dbReference>
<dbReference type="InterPro" id="IPR051559">
    <property type="entry name" value="HIF_prolyl_hydroxylases"/>
</dbReference>
<dbReference type="InterPro" id="IPR005123">
    <property type="entry name" value="Oxoglu/Fe-dep_dioxygenase_dom"/>
</dbReference>
<dbReference type="InterPro" id="IPR006620">
    <property type="entry name" value="Pro_4_hyd_alph"/>
</dbReference>
<dbReference type="InterPro" id="IPR044862">
    <property type="entry name" value="Pro_4_hyd_alph_FE2OG_OXY"/>
</dbReference>
<dbReference type="InterPro" id="IPR002893">
    <property type="entry name" value="Znf_MYND"/>
</dbReference>
<dbReference type="PANTHER" id="PTHR12907">
    <property type="entry name" value="EGL NINE HOMOLOG-RELATED"/>
    <property type="match status" value="1"/>
</dbReference>
<dbReference type="PANTHER" id="PTHR12907:SF26">
    <property type="entry name" value="HIF PROLYL HYDROXYLASE, ISOFORM C"/>
    <property type="match status" value="1"/>
</dbReference>
<dbReference type="Pfam" id="PF13640">
    <property type="entry name" value="2OG-FeII_Oxy_3"/>
    <property type="match status" value="1"/>
</dbReference>
<dbReference type="Pfam" id="PF01753">
    <property type="entry name" value="zf-MYND"/>
    <property type="match status" value="1"/>
</dbReference>
<dbReference type="SMART" id="SM00702">
    <property type="entry name" value="P4Hc"/>
    <property type="match status" value="1"/>
</dbReference>
<dbReference type="SUPFAM" id="SSF144232">
    <property type="entry name" value="HIT/MYND zinc finger-like"/>
    <property type="match status" value="1"/>
</dbReference>
<dbReference type="PROSITE" id="PS51471">
    <property type="entry name" value="FE2OG_OXY"/>
    <property type="match status" value="1"/>
</dbReference>
<dbReference type="PROSITE" id="PS01360">
    <property type="entry name" value="ZF_MYND_1"/>
    <property type="match status" value="1"/>
</dbReference>
<dbReference type="PROSITE" id="PS50865">
    <property type="entry name" value="ZF_MYND_2"/>
    <property type="match status" value="1"/>
</dbReference>
<reference evidence="25" key="1">
    <citation type="journal article" date="1999" name="Proc. Natl. Acad. Sci. U.S.A.">
        <title>Lethal paralysis of Caenorhabditis elegans by Pseudomonas aeruginosa.</title>
        <authorList>
            <person name="Darby C."/>
            <person name="Cosma C.L."/>
            <person name="Thomas J.H."/>
            <person name="Manoil C."/>
        </authorList>
    </citation>
    <scope>NUCLEOTIDE SEQUENCE [MRNA] (ISOFORM A)</scope>
    <scope>FUNCTION</scope>
    <scope>TISSUE SPECIFICITY</scope>
    <source>
        <strain evidence="22">Bristol N2</strain>
    </source>
</reference>
<reference evidence="24" key="2">
    <citation type="journal article" date="2009" name="Genetics">
        <title>Two distinct roles for EGL-9 in the regulation of HIF-1-mediated gene expression in Caenorhabditis elegans.</title>
        <authorList>
            <person name="Shao Z."/>
            <person name="Zhang Y."/>
            <person name="Powell-Coffman J.A."/>
        </authorList>
    </citation>
    <scope>NUCLEOTIDE SEQUENCE [MRNA] (ISOFORM A)</scope>
    <scope>FUNCTION</scope>
    <scope>CATALYTIC ACTIVITY</scope>
    <scope>COFACTOR</scope>
    <scope>ACTIVITY REGULATION</scope>
    <scope>DOMAIN</scope>
    <scope>MUTAGENESIS OF HIS-487</scope>
</reference>
<reference evidence="26" key="3">
    <citation type="journal article" date="1998" name="Science">
        <title>Genome sequence of the nematode C. elegans: a platform for investigating biology.</title>
        <authorList>
            <consortium name="The C. elegans sequencing consortium"/>
        </authorList>
    </citation>
    <scope>NUCLEOTIDE SEQUENCE [LARGE SCALE GENOMIC DNA]</scope>
    <source>
        <strain evidence="26">Bristol N2</strain>
    </source>
</reference>
<reference evidence="24" key="4">
    <citation type="journal article" date="1983" name="Genetics">
        <title>Egg-laying defective mutants of the nematode Caenorhabditis elegans.</title>
        <authorList>
            <person name="Trent C."/>
            <person name="Tsuing N."/>
            <person name="Horvitz H.R."/>
        </authorList>
    </citation>
    <scope>FUNCTION</scope>
</reference>
<reference evidence="24" key="5">
    <citation type="journal article" date="2001" name="Cell">
        <title>C. elegans EGL-9 and mammalian homologs define a family of dioxygenases that regulate HIF by prolyl hydroxylation.</title>
        <authorList>
            <person name="Epstein A.C.R."/>
            <person name="Gleadle J.M."/>
            <person name="McNeill L.A."/>
            <person name="Hewitson K.S."/>
            <person name="O'Rourke J."/>
            <person name="Mole D.R."/>
            <person name="Mukherji M."/>
            <person name="Metzen E."/>
            <person name="Wilson M.I."/>
            <person name="Dhanda A."/>
            <person name="Tian Y.M."/>
            <person name="Masson N."/>
            <person name="Hamilton D.L."/>
            <person name="Jaakkola P."/>
            <person name="Barstead R."/>
            <person name="Hodgkin J."/>
            <person name="Maxwell P.H."/>
            <person name="Pugh C.W."/>
            <person name="Schofield C.J."/>
            <person name="Ratcliffe P.J."/>
        </authorList>
    </citation>
    <scope>FUNCTION</scope>
    <scope>CATALYTIC ACTIVITY</scope>
    <scope>COFACTOR</scope>
    <scope>ACTIVITY REGULATION</scope>
</reference>
<reference evidence="24" key="6">
    <citation type="journal article" date="2001" name="J. Bacteriol.">
        <title>Pseudomonas aeruginosa PAO1 kills Caenorhabditis elegans by cyanide poisoning.</title>
        <authorList>
            <person name="Gallagher L.A."/>
            <person name="Manoil C."/>
        </authorList>
    </citation>
    <scope>FUNCTION</scope>
</reference>
<reference evidence="24" key="7">
    <citation type="journal article" date="2003" name="Physiol. Genomics">
        <title>HIF-1 is required for heat acclimation in the nematode Caenorhabditis elegans.</title>
        <authorList>
            <person name="Treinin M."/>
            <person name="Shliar J."/>
            <person name="Jiang H."/>
            <person name="Powell-Coffman J.A."/>
            <person name="Bromberg Z."/>
            <person name="Horowitz M."/>
        </authorList>
    </citation>
    <scope>FUNCTION</scope>
</reference>
<reference evidence="24" key="8">
    <citation type="journal article" date="2005" name="J. Biol. Chem.">
        <title>Roles of the HIF-1 hypoxia-inducible factor during hypoxia response in Caenorhabditis elegans.</title>
        <authorList>
            <person name="Shen C."/>
            <person name="Nettleton D."/>
            <person name="Jiang M."/>
            <person name="Kim S.K."/>
            <person name="Powell-Coffman J.A."/>
        </authorList>
    </citation>
    <scope>INDUCTION BY HYPOXIA</scope>
</reference>
<reference evidence="24" key="9">
    <citation type="journal article" date="2005" name="Mol. Microbiol.">
        <title>Paralysis and killing of Caenorhabditis elegans by enteropathogenic Escherichia coli requires the bacterial tryptophanase gene.</title>
        <authorList>
            <person name="Anyanful A."/>
            <person name="Dolan-Livengood J.M."/>
            <person name="Lewis T."/>
            <person name="Sheth S."/>
            <person name="Dezalia M.N."/>
            <person name="Sherman M.A."/>
            <person name="Kalman L.V."/>
            <person name="Benian G.M."/>
            <person name="Kalman D."/>
        </authorList>
    </citation>
    <scope>FUNCTION</scope>
</reference>
<reference evidence="24" key="10">
    <citation type="journal article" date="2008" name="Proc. Natl. Acad. Sci. U.S.A.">
        <title>Hypoxia and the HIF-1 transcriptional pathway reorganize a neuronal circuit for oxygen-dependent behavior in Caenorhabditis elegans.</title>
        <authorList>
            <person name="Chang A.J."/>
            <person name="Bargmann C.I."/>
        </authorList>
    </citation>
    <scope>FUNCTION</scope>
</reference>
<reference evidence="24" key="11">
    <citation type="journal article" date="2009" name="PLoS Pathog.">
        <title>Hypoxia and the hypoxic response pathway protect against pore-forming toxins in C. elegans.</title>
        <authorList>
            <person name="Bellier A."/>
            <person name="Chen C.S."/>
            <person name="Kao C.Y."/>
            <person name="Cinar H.N."/>
            <person name="Aroian R.V."/>
        </authorList>
    </citation>
    <scope>FUNCTION</scope>
    <scope>DISRUPTION PHENOTYPE</scope>
</reference>
<reference evidence="24" key="12">
    <citation type="journal article" date="2009" name="Science">
        <title>Proteasomal regulation of the hypoxic response modulates aging in C. elegans.</title>
        <authorList>
            <person name="Mehta R."/>
            <person name="Steinkraus K.A."/>
            <person name="Sutphin G.L."/>
            <person name="Ramos F.J."/>
            <person name="Shamieh L.S."/>
            <person name="Huh A."/>
            <person name="Davis C."/>
            <person name="Chandler-Brown D."/>
            <person name="Kaeberlein M."/>
        </authorList>
    </citation>
    <scope>FUNCTION</scope>
    <scope>DISRUPTION PHENOTYPE</scope>
</reference>
<reference evidence="24" key="13">
    <citation type="journal article" date="2010" name="PLoS Pathog.">
        <title>C. elegans SWAN-1 Binds to EGL-9 and regulates HIF-1-mediated resistance to the bacterial pathogen Pseudomonas aeruginosa PAO1.</title>
        <authorList>
            <person name="Shao Z."/>
            <person name="Zhang Y."/>
            <person name="Ye Q."/>
            <person name="Saldanha J.N."/>
            <person name="Powell-Coffman J.A."/>
        </authorList>
    </citation>
    <scope>FUNCTION</scope>
    <scope>INTERACTION WITH SWAN-1</scope>
</reference>
<reference evidence="24" key="14">
    <citation type="journal article" date="2012" name="EMBO J.">
        <title>Hypoxia regulates glutamate receptor trafficking through an HIF-independent mechanism.</title>
        <authorList>
            <person name="Park E.C."/>
            <person name="Ghose P."/>
            <person name="Shao Z."/>
            <person name="Ye Q."/>
            <person name="Kang L."/>
            <person name="Xu X.Z."/>
            <person name="Powell-Coffman J.A."/>
            <person name="Rongo C."/>
        </authorList>
    </citation>
    <scope>FUNCTION</scope>
    <scope>INTERACTION WITH LIN-10</scope>
    <scope>SUBCELLULAR LOCATION</scope>
    <scope>MUTAGENESIS OF HIS-487</scope>
    <scope>CHARACTERIZATION OF ISOFORMS A; C AND E</scope>
</reference>
<reference evidence="24" key="15">
    <citation type="journal article" date="2012" name="Neuron">
        <title>CYSL-1 interacts with the O2-sensing hydroxylase EGL-9 to promote H2S-modulated hypoxia-induced behavioral plasticity in C. elegans.</title>
        <authorList>
            <person name="Ma D.K."/>
            <person name="Vozdek R."/>
            <person name="Bhatla N."/>
            <person name="Horvitz H.R."/>
        </authorList>
    </citation>
    <scope>FUNCTION</scope>
    <scope>INTERACTION WITH CYSL-1</scope>
    <scope>MUTAGENESIS OF GLU-720</scope>
</reference>
<reference evidence="24" key="16">
    <citation type="journal article" date="2012" name="PLoS Genet.">
        <title>Insulin/IGF-1 and hypoxia signaling act in concert to regulate iron homeostasis in Caenorhabditis elegans.</title>
        <authorList>
            <person name="Ackerman D."/>
            <person name="Gems D."/>
        </authorList>
    </citation>
    <scope>FUNCTION</scope>
</reference>
<reference evidence="24" key="17">
    <citation type="journal article" date="2012" name="PLoS Pathog.">
        <title>EGL-9 controls C. elegans host defense specificity through prolyl hydroxylation-dependent and -independent HIF-1 pathways.</title>
        <authorList>
            <person name="Luhachack L.G."/>
            <person name="Visvikis O."/>
            <person name="Wollenberg A.C."/>
            <person name="Lacy-Hulbert A."/>
            <person name="Stuart L.M."/>
            <person name="Irazoqui J.E."/>
        </authorList>
    </citation>
    <scope>FUNCTION</scope>
    <scope>DOMAIN</scope>
</reference>
<reference evidence="24" key="18">
    <citation type="journal article" date="2013" name="PLoS Genet.">
        <title>Anoxia-reoxygenation regulates mitochondrial dynamics through the hypoxia response pathway, SKN-1/Nrf, and stomatin-like protein STL-1/SLP-2.</title>
        <authorList>
            <person name="Ghose P."/>
            <person name="Park E.C."/>
            <person name="Tabakin A."/>
            <person name="Salazar-Vasquez N."/>
            <person name="Rongo C."/>
        </authorList>
    </citation>
    <scope>FUNCTION</scope>
</reference>
<organism evidence="26">
    <name type="scientific">Caenorhabditis elegans</name>
    <dbReference type="NCBI Taxonomy" id="6239"/>
    <lineage>
        <taxon>Eukaryota</taxon>
        <taxon>Metazoa</taxon>
        <taxon>Ecdysozoa</taxon>
        <taxon>Nematoda</taxon>
        <taxon>Chromadorea</taxon>
        <taxon>Rhabditida</taxon>
        <taxon>Rhabditina</taxon>
        <taxon>Rhabditomorpha</taxon>
        <taxon>Rhabditoidea</taxon>
        <taxon>Rhabditidae</taxon>
        <taxon>Peloderinae</taxon>
        <taxon>Caenorhabditis</taxon>
    </lineage>
</organism>
<evidence type="ECO:0000250" key="1">
    <source>
        <dbReference type="UniProtKB" id="Q9GZT9"/>
    </source>
</evidence>
<evidence type="ECO:0000255" key="2">
    <source>
        <dbReference type="PROSITE-ProRule" id="PRU00134"/>
    </source>
</evidence>
<evidence type="ECO:0000255" key="3">
    <source>
        <dbReference type="PROSITE-ProRule" id="PRU00805"/>
    </source>
</evidence>
<evidence type="ECO:0000256" key="4">
    <source>
        <dbReference type="SAM" id="MobiDB-lite"/>
    </source>
</evidence>
<evidence type="ECO:0000269" key="5">
    <source>
    </source>
</evidence>
<evidence type="ECO:0000269" key="6">
    <source>
    </source>
</evidence>
<evidence type="ECO:0000269" key="7">
    <source>
    </source>
</evidence>
<evidence type="ECO:0000269" key="8">
    <source>
    </source>
</evidence>
<evidence type="ECO:0000269" key="9">
    <source>
    </source>
</evidence>
<evidence type="ECO:0000269" key="10">
    <source>
    </source>
</evidence>
<evidence type="ECO:0000269" key="11">
    <source>
    </source>
</evidence>
<evidence type="ECO:0000269" key="12">
    <source>
    </source>
</evidence>
<evidence type="ECO:0000269" key="13">
    <source>
    </source>
</evidence>
<evidence type="ECO:0000269" key="14">
    <source>
    </source>
</evidence>
<evidence type="ECO:0000269" key="15">
    <source>
    </source>
</evidence>
<evidence type="ECO:0000269" key="16">
    <source>
    </source>
</evidence>
<evidence type="ECO:0000269" key="17">
    <source>
    </source>
</evidence>
<evidence type="ECO:0000269" key="18">
    <source>
    </source>
</evidence>
<evidence type="ECO:0000269" key="19">
    <source>
    </source>
</evidence>
<evidence type="ECO:0000269" key="20">
    <source>
    </source>
</evidence>
<evidence type="ECO:0000269" key="21">
    <source>
    </source>
</evidence>
<evidence type="ECO:0000303" key="22">
    <source>
    </source>
</evidence>
<evidence type="ECO:0000303" key="23">
    <source>
    </source>
</evidence>
<evidence type="ECO:0000305" key="24"/>
<evidence type="ECO:0000312" key="25">
    <source>
        <dbReference type="EMBL" id="AAD56365.1"/>
    </source>
</evidence>
<evidence type="ECO:0000312" key="26">
    <source>
        <dbReference type="Proteomes" id="UP000001940"/>
    </source>
</evidence>
<evidence type="ECO:0000312" key="27">
    <source>
        <dbReference type="WormBase" id="F22E12.4a"/>
    </source>
</evidence>
<evidence type="ECO:0000312" key="28">
    <source>
        <dbReference type="WormBase" id="F22E12.4b"/>
    </source>
</evidence>
<evidence type="ECO:0000312" key="29">
    <source>
        <dbReference type="WormBase" id="F22E12.4c"/>
    </source>
</evidence>
<evidence type="ECO:0000312" key="30">
    <source>
        <dbReference type="WormBase" id="F22E12.4d"/>
    </source>
</evidence>
<evidence type="ECO:0000312" key="31">
    <source>
        <dbReference type="WormBase" id="F22E12.4e"/>
    </source>
</evidence>
<feature type="chain" id="PRO_0000433363" description="Hypoxia-inducible factor prolyl hydroxylase" evidence="24">
    <location>
        <begin position="1"/>
        <end position="723"/>
    </location>
</feature>
<feature type="domain" description="Fe2OG dioxygenase" evidence="3">
    <location>
        <begin position="468"/>
        <end position="566"/>
    </location>
</feature>
<feature type="zinc finger region" description="MYND-type; atypical" evidence="2">
    <location>
        <begin position="39"/>
        <end position="79"/>
    </location>
</feature>
<feature type="region of interest" description="Disordered" evidence="4">
    <location>
        <begin position="249"/>
        <end position="275"/>
    </location>
</feature>
<feature type="region of interest" description="Disordered" evidence="4">
    <location>
        <begin position="294"/>
        <end position="323"/>
    </location>
</feature>
<feature type="region of interest" description="Disordered" evidence="4">
    <location>
        <begin position="678"/>
        <end position="723"/>
    </location>
</feature>
<feature type="compositionally biased region" description="Low complexity" evidence="4">
    <location>
        <begin position="249"/>
        <end position="270"/>
    </location>
</feature>
<feature type="compositionally biased region" description="Basic and acidic residues" evidence="4">
    <location>
        <begin position="687"/>
        <end position="699"/>
    </location>
</feature>
<feature type="binding site" evidence="2">
    <location>
        <position position="39"/>
    </location>
    <ligand>
        <name>Zn(2+)</name>
        <dbReference type="ChEBI" id="CHEBI:29105"/>
        <label>1</label>
    </ligand>
</feature>
<feature type="binding site" evidence="2">
    <location>
        <position position="42"/>
    </location>
    <ligand>
        <name>Zn(2+)</name>
        <dbReference type="ChEBI" id="CHEBI:29105"/>
        <label>1</label>
    </ligand>
</feature>
<feature type="binding site" evidence="2">
    <location>
        <position position="54"/>
    </location>
    <ligand>
        <name>Zn(2+)</name>
        <dbReference type="ChEBI" id="CHEBI:29105"/>
        <label>2</label>
    </ligand>
</feature>
<feature type="binding site" evidence="2">
    <location>
        <position position="57"/>
    </location>
    <ligand>
        <name>Zn(2+)</name>
        <dbReference type="ChEBI" id="CHEBI:29105"/>
        <label>2</label>
    </ligand>
</feature>
<feature type="binding site" evidence="2">
    <location>
        <position position="63"/>
    </location>
    <ligand>
        <name>Zn(2+)</name>
        <dbReference type="ChEBI" id="CHEBI:29105"/>
        <label>1</label>
    </ligand>
</feature>
<feature type="binding site" evidence="2">
    <location>
        <position position="67"/>
    </location>
    <ligand>
        <name>Zn(2+)</name>
        <dbReference type="ChEBI" id="CHEBI:29105"/>
        <label>1</label>
    </ligand>
</feature>
<feature type="binding site" evidence="2">
    <location>
        <position position="75"/>
    </location>
    <ligand>
        <name>Zn(2+)</name>
        <dbReference type="ChEBI" id="CHEBI:29105"/>
        <label>2</label>
    </ligand>
</feature>
<feature type="binding site" evidence="2">
    <location>
        <position position="79"/>
    </location>
    <ligand>
        <name>Zn(2+)</name>
        <dbReference type="ChEBI" id="CHEBI:29105"/>
        <label>2</label>
    </ligand>
</feature>
<feature type="binding site" evidence="3">
    <location>
        <position position="487"/>
    </location>
    <ligand>
        <name>Fe cation</name>
        <dbReference type="ChEBI" id="CHEBI:24875"/>
    </ligand>
</feature>
<feature type="binding site" evidence="3">
    <location>
        <position position="489"/>
    </location>
    <ligand>
        <name>Fe cation</name>
        <dbReference type="ChEBI" id="CHEBI:24875"/>
    </ligand>
</feature>
<feature type="binding site" evidence="3">
    <location>
        <position position="548"/>
    </location>
    <ligand>
        <name>Fe cation</name>
        <dbReference type="ChEBI" id="CHEBI:24875"/>
    </ligand>
</feature>
<feature type="binding site" evidence="3">
    <location>
        <position position="557"/>
    </location>
    <ligand>
        <name>2-oxoglutarate</name>
        <dbReference type="ChEBI" id="CHEBI:16810"/>
    </ligand>
</feature>
<feature type="splice variant" id="VSP_057745" description="In isoform c." evidence="24">
    <original>MSSAPNDDCEIDKGTPSTASLFTTLMLSQPSSSTAVLQCTYCGSSCTSSQLQTCLFCGTVAYCSKEHQQLDWLTHKMICKSLQTSGMVPSNLMPQAAPAVMAPIPPTVSFDDPALTTSLLLSLQNNPILNQTISNFPPTFSITSKTEPEPSIPIQIPQRISSTSTVPFSSEGSAFKPYRNTHVFNSISSESMSSMCTSHEASLEHMSSASLAMFPTSSTAQSDISRLAQVLSLAGDSPASLALVTTSVPSTASTATIPPPATTTSSATSSGKSETITVGKEKIIQTDDPDIQ</original>
    <variation>MPLRTIVAPTSYGIPTPMPSQSRWKPYSKTMKPS</variation>
    <location>
        <begin position="1"/>
        <end position="292"/>
    </location>
</feature>
<feature type="splice variant" id="VSP_057746" description="In isoform e." evidence="24">
    <location>
        <begin position="1"/>
        <end position="76"/>
    </location>
</feature>
<feature type="splice variant" id="VSP_057747" description="In isoform b." evidence="24">
    <original>YI</original>
    <variation>RN</variation>
    <location>
        <begin position="362"/>
        <end position="363"/>
    </location>
</feature>
<feature type="splice variant" id="VSP_057748" description="In isoform b." evidence="24">
    <location>
        <begin position="364"/>
        <end position="723"/>
    </location>
</feature>
<feature type="splice variant" id="VSP_057749" description="In isoform d." evidence="24">
    <location>
        <begin position="642"/>
        <end position="662"/>
    </location>
</feature>
<feature type="mutagenesis site" description="Loss of hydroxylase activity resulting in loss of oxygen-mediated hif-1 degradation. Inhibition of hif-1 transcriptional activity, which is independent of egl-9 hydroxylase activity, is only slightly affected. Loss of glr-1 recycling; in isoform e." evidence="14 17">
    <original>H</original>
    <variation>A</variation>
    <location>
        <position position="487"/>
    </location>
</feature>
<feature type="mutagenesis site" description="Loss of interaction with cysl-1 associated with a loss of hypoxia-mediated inhibition of behavior adaptation." evidence="19">
    <original>E</original>
    <variation>K</variation>
    <location>
        <position position="720"/>
    </location>
</feature>
<comment type="function">
    <text evidence="5 6 7 8 9 11 12 13 14 15 16 18 19 20 21">Cellular oxygen sensor which regulates the stability and the activity of hypoxia-inducible transcription factor, hif-1. In normoxic conditions, hydroxylates hif-1 targeting it for vhl-1-mediated proteasomal degradation (PubMed:11595184). In addition, regulates hif-1 transcriptional activity in a vhl-1-independent manner and independently of its hydroxylase activity (PubMed:19737748). By regulating hif-1 activity, controls several cellular responses. Mediates susceptibility to B.thuringiensis and V.cholerae pore-forming toxins and enteropathogenic E.coli (PubMed:16091039, PubMed:20011506). Mediates susceptibility to P.aeruginosa PAO1-mediated killing by regulating resistance to cyanide produced by P.aeruginosa (PubMed:10611362, PubMed:11591663, PubMed:20865124). Mediates resistance to S.aureus-mediated killing (PubMed:22792069). In addition, plays a role in heat acclimation, neuronal development, behavioral responses to reoxygenation and hydrogen sulfide, iron homeostasis and aging (PubMed:12686697, PubMed:18477695, PubMed:19372390, PubMed:22396654, PubMed:22405203). In neurons, involved in mitochondrion fusion during reoxygenation (PubMed:24385935). Involved in egg laying (PubMed:10611362, PubMed:11813735).</text>
</comment>
<comment type="function">
    <molecule>Isoform e</molecule>
    <text evidence="17">Regulates the trafficking of the glutamate receptor glr-1, probably independently of hif-1, by regulating lin-10 subcellular localization in response to oxygen levels. May hydroxylate lin-10.</text>
</comment>
<comment type="catalytic activity">
    <reaction evidence="7 14">
        <text>L-prolyl-[hypoxia-inducible factor alpha subunit] + 2-oxoglutarate + O2 = trans-4-hydroxy-L-prolyl-[hypoxia-inducible factor alpha subunit] + succinate + CO2</text>
        <dbReference type="Rhea" id="RHEA:48400"/>
        <dbReference type="Rhea" id="RHEA-COMP:12093"/>
        <dbReference type="Rhea" id="RHEA-COMP:12094"/>
        <dbReference type="ChEBI" id="CHEBI:15379"/>
        <dbReference type="ChEBI" id="CHEBI:16526"/>
        <dbReference type="ChEBI" id="CHEBI:16810"/>
        <dbReference type="ChEBI" id="CHEBI:30031"/>
        <dbReference type="ChEBI" id="CHEBI:50342"/>
        <dbReference type="ChEBI" id="CHEBI:61965"/>
        <dbReference type="EC" id="1.14.11.29"/>
    </reaction>
</comment>
<comment type="cofactor">
    <cofactor evidence="7 14">
        <name>Fe(2+)</name>
        <dbReference type="ChEBI" id="CHEBI:29033"/>
    </cofactor>
    <text evidence="3">Binds 1 Fe(2+) ion per subunit.</text>
</comment>
<comment type="cofactor">
    <cofactor evidence="7">
        <name>L-ascorbate</name>
        <dbReference type="ChEBI" id="CHEBI:38290"/>
    </cofactor>
</comment>
<comment type="activity regulation">
    <text evidence="7 14">Inhibited by Co(2+) and dimethyloxalylglycine (PubMed:11595184). Inhibited by the iron chelator 2, 2'-dipyridyl (PubMed:19737748).</text>
</comment>
<comment type="subunit">
    <text evidence="16 17 19">Interacts (via catalytic domain) with lin-10 (via N-terminus); the interaction regulates lin-10 subcellular localization; the interaction is direct (PubMed:22252129). Interacts (via catalytic domain) with swan-1 (via WD 1-3 repeats); the interaction may regulate vhl-1-independent hif-1 transcriptional activity; the interaction is direct (PubMed:20865124). Interacts (via C-terminus) with cysl-1; the interaction is enhanced by hydrogen disulfide and activates hif-1-mediated transcription; the interaction is direct (PubMed:22405203).</text>
</comment>
<comment type="interaction">
    <interactant intactId="EBI-2004151">
        <id>G5EBV0</id>
    </interactant>
    <interactant intactId="EBI-2413537">
        <id>Q93244</id>
        <label>cysl-1</label>
    </interactant>
    <organismsDiffer>false</organismsDiffer>
    <experiments>3</experiments>
</comment>
<comment type="interaction">
    <interactant intactId="EBI-2004151">
        <id>G5EBV0</id>
    </interactant>
    <interactant intactId="EBI-2315822">
        <id>Q7K7J0</id>
        <label>gei-18</label>
    </interactant>
    <organismsDiffer>false</organismsDiffer>
    <experiments>3</experiments>
</comment>
<comment type="interaction">
    <interactant intactId="EBI-2004151">
        <id>G5EBV0</id>
    </interactant>
    <interactant intactId="EBI-331968">
        <id>Q93758</id>
        <label>swan-1</label>
    </interactant>
    <organismsDiffer>false</organismsDiffer>
    <experiments>2</experiments>
</comment>
<comment type="subcellular location">
    <molecule>Isoform a</molecule>
    <subcellularLocation>
        <location evidence="17">Cytoplasm</location>
    </subcellularLocation>
    <subcellularLocation>
        <location evidence="17">Nucleus</location>
    </subcellularLocation>
    <subcellularLocation>
        <location evidence="17">Cell projection</location>
        <location evidence="17">Dendrite</location>
    </subcellularLocation>
    <text evidence="17">In interneurons, localizes throughout the ventral cord dendrites.</text>
</comment>
<comment type="subcellular location">
    <molecule>Isoform c</molecule>
    <subcellularLocation>
        <location evidence="17">Cytoplasm</location>
    </subcellularLocation>
    <subcellularLocation>
        <location evidence="17">Nucleus</location>
    </subcellularLocation>
    <subcellularLocation>
        <location evidence="17">Cell projection</location>
        <location evidence="17">Dendrite</location>
    </subcellularLocation>
    <text evidence="17">In interneurons, localizes throughout the ventral cord dendrites.</text>
</comment>
<comment type="subcellular location">
    <molecule>Isoform e</molecule>
    <subcellularLocation>
        <location evidence="17">Cytoplasm</location>
    </subcellularLocation>
    <subcellularLocation>
        <location evidence="17">Nucleus</location>
    </subcellularLocation>
    <subcellularLocation>
        <location evidence="17">Cell projection</location>
        <location evidence="17">Axon</location>
    </subcellularLocation>
    <text evidence="17">In interneurons, localizes in puncta (which probably correspond to endosomes) along the ventral cord. Localization to puncta is regulated by oxygen levels. Co-localizes with lin-10 in puncta.</text>
</comment>
<comment type="alternative products">
    <event type="alternative splicing"/>
    <isoform>
        <id>G5EBV0-1</id>
        <name evidence="27">a</name>
        <sequence type="displayed"/>
    </isoform>
    <isoform>
        <id>G5EBV0-2</id>
        <name evidence="28">b</name>
        <sequence type="described" ref="VSP_057747 VSP_057748"/>
    </isoform>
    <isoform>
        <id>G5EBV0-3</id>
        <name evidence="29">c</name>
        <sequence type="described" ref="VSP_057745"/>
    </isoform>
    <isoform>
        <id>G5EBV0-4</id>
        <name evidence="30">d</name>
        <sequence type="described" ref="VSP_057749"/>
    </isoform>
    <isoform>
        <id>G5EBV0-5</id>
        <name evidence="31">e</name>
        <sequence type="described" ref="VSP_057746"/>
    </isoform>
</comment>
<comment type="tissue specificity">
    <text evidence="5">In larvae and adults, expressed in pharyngeal and body wall muscles.</text>
</comment>
<comment type="induction">
    <text evidence="10">Induced by hypoxia.</text>
</comment>
<comment type="domain">
    <text evidence="14 20">The MYND-type domain is not required for oxygen-mediated hif-1 degradation or for inhibiting hif-1 transcriptional activity (PubMed:19737748). Susceptibility to S.aureus infection requires the Ser-rich region but not the MYND-type or Fe2OG dioxygenase domains (PubMed:22792069).</text>
</comment>
<comment type="disruption phenotype">
    <text evidence="13 15">RNAi-mediated knockdown causes enhanced resistance to polyglutamine or amyloid-beta-mediated paralysis and an increase in adult life span (PubMed:19372390). In addition, causes resistance to B.thuringiensis pore-forming toxin CryA21-mediated toxicity (PubMed:20011506).</text>
</comment>
<protein>
    <recommendedName>
        <fullName evidence="1">Hypoxia-inducible factor prolyl hydroxylase</fullName>
        <shortName evidence="23">HIF-PH</shortName>
        <ecNumber evidence="7 14">1.14.11.29</ecNumber>
    </recommendedName>
    <alternativeName>
        <fullName evidence="27">Egg-laying defective protein 9</fullName>
    </alternativeName>
    <alternativeName>
        <fullName evidence="24">Hypoxia-inducible factor-proline dioxygenase</fullName>
    </alternativeName>
</protein>